<comment type="catalytic activity">
    <reaction evidence="1">
        <text>(4aS,6R)-4a-hydroxy-L-erythro-5,6,7,8-tetrahydrobiopterin = (6R)-L-erythro-6,7-dihydrobiopterin + H2O</text>
        <dbReference type="Rhea" id="RHEA:11920"/>
        <dbReference type="ChEBI" id="CHEBI:15377"/>
        <dbReference type="ChEBI" id="CHEBI:15642"/>
        <dbReference type="ChEBI" id="CHEBI:43120"/>
        <dbReference type="EC" id="4.2.1.96"/>
    </reaction>
</comment>
<comment type="similarity">
    <text evidence="1">Belongs to the pterin-4-alpha-carbinolamine dehydratase family.</text>
</comment>
<gene>
    <name type="ordered locus">sync_2044</name>
</gene>
<sequence>MSKQAVLLDEAARQSLYSSCPAWTIASDGLVREWRFHSFVEAFGFMTQVALLAERANHHPEWSNVYNRVTIRLTTHDLGGLSSRDAELAQAIDSLSPTT</sequence>
<name>PHS_SYNS3</name>
<reference key="1">
    <citation type="journal article" date="2006" name="Proc. Natl. Acad. Sci. U.S.A.">
        <title>Genome sequence of Synechococcus CC9311: insights into adaptation to a coastal environment.</title>
        <authorList>
            <person name="Palenik B."/>
            <person name="Ren Q."/>
            <person name="Dupont C.L."/>
            <person name="Myers G.S."/>
            <person name="Heidelberg J.F."/>
            <person name="Badger J.H."/>
            <person name="Madupu R."/>
            <person name="Nelson W.C."/>
            <person name="Brinkac L.M."/>
            <person name="Dodson R.J."/>
            <person name="Durkin A.S."/>
            <person name="Daugherty S.C."/>
            <person name="Sullivan S.A."/>
            <person name="Khouri H."/>
            <person name="Mohamoud Y."/>
            <person name="Halpin R."/>
            <person name="Paulsen I.T."/>
        </authorList>
    </citation>
    <scope>NUCLEOTIDE SEQUENCE [LARGE SCALE GENOMIC DNA]</scope>
    <source>
        <strain>CC9311</strain>
    </source>
</reference>
<dbReference type="EC" id="4.2.1.96" evidence="1"/>
<dbReference type="EMBL" id="CP000435">
    <property type="protein sequence ID" value="ABI45298.1"/>
    <property type="molecule type" value="Genomic_DNA"/>
</dbReference>
<dbReference type="RefSeq" id="WP_011619959.1">
    <property type="nucleotide sequence ID" value="NC_008319.1"/>
</dbReference>
<dbReference type="SMR" id="Q0I8H5"/>
<dbReference type="STRING" id="64471.sync_2044"/>
<dbReference type="KEGG" id="syg:sync_2044"/>
<dbReference type="eggNOG" id="COG2154">
    <property type="taxonomic scope" value="Bacteria"/>
</dbReference>
<dbReference type="HOGENOM" id="CLU_081974_3_2_3"/>
<dbReference type="OrthoDB" id="9794987at2"/>
<dbReference type="Proteomes" id="UP000001961">
    <property type="component" value="Chromosome"/>
</dbReference>
<dbReference type="GO" id="GO:0008124">
    <property type="term" value="F:4-alpha-hydroxytetrahydrobiopterin dehydratase activity"/>
    <property type="evidence" value="ECO:0007669"/>
    <property type="project" value="UniProtKB-UniRule"/>
</dbReference>
<dbReference type="GO" id="GO:0006729">
    <property type="term" value="P:tetrahydrobiopterin biosynthetic process"/>
    <property type="evidence" value="ECO:0007669"/>
    <property type="project" value="InterPro"/>
</dbReference>
<dbReference type="CDD" id="cd00914">
    <property type="entry name" value="PCD_DCoH_subfamily_b"/>
    <property type="match status" value="1"/>
</dbReference>
<dbReference type="Gene3D" id="3.30.1360.20">
    <property type="entry name" value="Transcriptional coactivator/pterin dehydratase"/>
    <property type="match status" value="1"/>
</dbReference>
<dbReference type="HAMAP" id="MF_00434">
    <property type="entry name" value="Pterin_4_alpha"/>
    <property type="match status" value="1"/>
</dbReference>
<dbReference type="InterPro" id="IPR036428">
    <property type="entry name" value="PCD_sf"/>
</dbReference>
<dbReference type="InterPro" id="IPR001533">
    <property type="entry name" value="Pterin_deHydtase"/>
</dbReference>
<dbReference type="NCBIfam" id="NF002018">
    <property type="entry name" value="PRK00823.1-3"/>
    <property type="match status" value="1"/>
</dbReference>
<dbReference type="PANTHER" id="PTHR12599">
    <property type="entry name" value="PTERIN-4-ALPHA-CARBINOLAMINE DEHYDRATASE"/>
    <property type="match status" value="1"/>
</dbReference>
<dbReference type="PANTHER" id="PTHR12599:SF0">
    <property type="entry name" value="PTERIN-4-ALPHA-CARBINOLAMINE DEHYDRATASE"/>
    <property type="match status" value="1"/>
</dbReference>
<dbReference type="Pfam" id="PF01329">
    <property type="entry name" value="Pterin_4a"/>
    <property type="match status" value="1"/>
</dbReference>
<dbReference type="SUPFAM" id="SSF55248">
    <property type="entry name" value="PCD-like"/>
    <property type="match status" value="1"/>
</dbReference>
<evidence type="ECO:0000255" key="1">
    <source>
        <dbReference type="HAMAP-Rule" id="MF_00434"/>
    </source>
</evidence>
<feature type="chain" id="PRO_1000050467" description="Putative pterin-4-alpha-carbinolamine dehydratase">
    <location>
        <begin position="1"/>
        <end position="99"/>
    </location>
</feature>
<accession>Q0I8H5</accession>
<keyword id="KW-0456">Lyase</keyword>
<keyword id="KW-1185">Reference proteome</keyword>
<protein>
    <recommendedName>
        <fullName evidence="1">Putative pterin-4-alpha-carbinolamine dehydratase</fullName>
        <shortName evidence="1">PHS</shortName>
        <ecNumber evidence="1">4.2.1.96</ecNumber>
    </recommendedName>
    <alternativeName>
        <fullName evidence="1">4-alpha-hydroxy-tetrahydropterin dehydratase</fullName>
    </alternativeName>
    <alternativeName>
        <fullName evidence="1">Pterin carbinolamine dehydratase</fullName>
        <shortName evidence="1">PCD</shortName>
    </alternativeName>
</protein>
<organism>
    <name type="scientific">Synechococcus sp. (strain CC9311)</name>
    <dbReference type="NCBI Taxonomy" id="64471"/>
    <lineage>
        <taxon>Bacteria</taxon>
        <taxon>Bacillati</taxon>
        <taxon>Cyanobacteriota</taxon>
        <taxon>Cyanophyceae</taxon>
        <taxon>Synechococcales</taxon>
        <taxon>Synechococcaceae</taxon>
        <taxon>Synechococcus</taxon>
    </lineage>
</organism>
<proteinExistence type="inferred from homology"/>